<feature type="chain" id="PRO_0000213035" description="Glucose-6-phosphate 1-epimerase">
    <location>
        <begin position="1"/>
        <end position="297"/>
    </location>
</feature>
<feature type="active site" evidence="2">
    <location>
        <position position="159"/>
    </location>
</feature>
<feature type="active site" evidence="2">
    <location>
        <position position="264"/>
    </location>
</feature>
<feature type="binding site" evidence="2">
    <location>
        <position position="57"/>
    </location>
    <ligand>
        <name>substrate</name>
    </ligand>
</feature>
<feature type="binding site" evidence="2">
    <location>
        <position position="81"/>
    </location>
    <ligand>
        <name>substrate</name>
    </ligand>
</feature>
<feature type="binding site" evidence="2">
    <location>
        <position position="86"/>
    </location>
    <ligand>
        <name>substrate</name>
    </ligand>
</feature>
<feature type="binding site" evidence="2">
    <location>
        <position position="203"/>
    </location>
    <ligand>
        <name>substrate</name>
    </ligand>
</feature>
<feature type="modified residue" description="Phosphoserine" evidence="5">
    <location>
        <position position="88"/>
    </location>
</feature>
<feature type="strand" evidence="6">
    <location>
        <begin position="3"/>
        <end position="5"/>
    </location>
</feature>
<feature type="strand" evidence="6">
    <location>
        <begin position="7"/>
        <end position="14"/>
    </location>
</feature>
<feature type="strand" evidence="6">
    <location>
        <begin position="17"/>
        <end position="25"/>
    </location>
</feature>
<feature type="strand" evidence="6">
    <location>
        <begin position="30"/>
        <end position="36"/>
    </location>
</feature>
<feature type="strand" evidence="6">
    <location>
        <begin position="51"/>
        <end position="54"/>
    </location>
</feature>
<feature type="strand" evidence="6">
    <location>
        <begin position="57"/>
        <end position="60"/>
    </location>
</feature>
<feature type="strand" evidence="6">
    <location>
        <begin position="62"/>
        <end position="65"/>
    </location>
</feature>
<feature type="strand" evidence="6">
    <location>
        <begin position="71"/>
        <end position="73"/>
    </location>
</feature>
<feature type="helix" evidence="6">
    <location>
        <begin position="76"/>
        <end position="78"/>
    </location>
</feature>
<feature type="helix" evidence="6">
    <location>
        <begin position="85"/>
        <end position="87"/>
    </location>
</feature>
<feature type="strand" evidence="6">
    <location>
        <begin position="91"/>
        <end position="97"/>
    </location>
</feature>
<feature type="turn" evidence="6">
    <location>
        <begin position="98"/>
        <end position="101"/>
    </location>
</feature>
<feature type="strand" evidence="6">
    <location>
        <begin position="102"/>
        <end position="107"/>
    </location>
</feature>
<feature type="helix" evidence="6">
    <location>
        <begin position="109"/>
        <end position="111"/>
    </location>
</feature>
<feature type="helix" evidence="6">
    <location>
        <begin position="114"/>
        <end position="119"/>
    </location>
</feature>
<feature type="strand" evidence="6">
    <location>
        <begin position="125"/>
        <end position="132"/>
    </location>
</feature>
<feature type="strand" evidence="6">
    <location>
        <begin position="134"/>
        <end position="144"/>
    </location>
</feature>
<feature type="strand" evidence="6">
    <location>
        <begin position="152"/>
        <end position="158"/>
    </location>
</feature>
<feature type="strand" evidence="6">
    <location>
        <begin position="161"/>
        <end position="163"/>
    </location>
</feature>
<feature type="helix" evidence="6">
    <location>
        <begin position="167"/>
        <end position="169"/>
    </location>
</feature>
<feature type="strand" evidence="6">
    <location>
        <begin position="170"/>
        <end position="174"/>
    </location>
</feature>
<feature type="strand" evidence="6">
    <location>
        <begin position="179"/>
        <end position="182"/>
    </location>
</feature>
<feature type="turn" evidence="6">
    <location>
        <begin position="183"/>
        <end position="186"/>
    </location>
</feature>
<feature type="strand" evidence="6">
    <location>
        <begin position="187"/>
        <end position="190"/>
    </location>
</feature>
<feature type="strand" evidence="6">
    <location>
        <begin position="193"/>
        <end position="196"/>
    </location>
</feature>
<feature type="strand" evidence="6">
    <location>
        <begin position="202"/>
        <end position="206"/>
    </location>
</feature>
<feature type="strand" evidence="6">
    <location>
        <begin position="215"/>
        <end position="219"/>
    </location>
</feature>
<feature type="strand" evidence="6">
    <location>
        <begin position="222"/>
        <end position="231"/>
    </location>
</feature>
<feature type="strand" evidence="6">
    <location>
        <begin position="234"/>
        <end position="239"/>
    </location>
</feature>
<feature type="helix" evidence="6">
    <location>
        <begin position="241"/>
        <end position="247"/>
    </location>
</feature>
<feature type="helix" evidence="6">
    <location>
        <begin position="256"/>
        <end position="259"/>
    </location>
</feature>
<feature type="strand" evidence="6">
    <location>
        <begin position="260"/>
        <end position="274"/>
    </location>
</feature>
<feature type="strand" evidence="6">
    <location>
        <begin position="279"/>
        <end position="287"/>
    </location>
</feature>
<protein>
    <recommendedName>
        <fullName evidence="4">Glucose-6-phosphate 1-epimerase</fullName>
        <ecNumber evidence="2">5.1.3.15</ecNumber>
    </recommendedName>
    <alternativeName>
        <fullName evidence="3">D-hexose-6-phosphate mutarotase</fullName>
    </alternativeName>
</protein>
<sequence>MPIKETDKEVVLTHPADETTSVHILKYGATVYSWKLKSEEQLWLSTAAKLDGSKPVRGGIPLVFPVFGKNSTDEHLSKLPQHGLARNSTWEFLGQTKENPPTVQFGLKPEIANPELTKLWPMDYLLILTVELGSDYLKTAIEVENTSSSKELKFNWLFHTYFRIEDIEGTMVSNLAGMKLYDQLLKESYVDKHPVVTFNQETDVIYQNVSAERAIQIVDKGVQIHTLKRYNLPDTVVWNPWIEKSQGMADFEPKTGYQQMICIEPGHVHDFISLAPGKKWNAYQLLCKEELKYQAIQ</sequence>
<keyword id="KW-0002">3D-structure</keyword>
<keyword id="KW-0413">Isomerase</keyword>
<keyword id="KW-0597">Phosphoprotein</keyword>
<keyword id="KW-1185">Reference proteome</keyword>
<evidence type="ECO:0000269" key="1">
    <source>
    </source>
</evidence>
<evidence type="ECO:0000269" key="2">
    <source>
    </source>
</evidence>
<evidence type="ECO:0000303" key="3">
    <source>
    </source>
</evidence>
<evidence type="ECO:0000305" key="4"/>
<evidence type="ECO:0007744" key="5">
    <source>
    </source>
</evidence>
<evidence type="ECO:0007829" key="6">
    <source>
        <dbReference type="PDB" id="2CIR"/>
    </source>
</evidence>
<accession>Q03161</accession>
<accession>D6VZS2</accession>
<dbReference type="EC" id="5.1.3.15" evidence="2"/>
<dbReference type="EMBL" id="Z49807">
    <property type="protein sequence ID" value="CAA89900.1"/>
    <property type="molecule type" value="Genomic_DNA"/>
</dbReference>
<dbReference type="EMBL" id="BK006946">
    <property type="protein sequence ID" value="DAA09996.1"/>
    <property type="molecule type" value="Genomic_DNA"/>
</dbReference>
<dbReference type="PIR" id="S55085">
    <property type="entry name" value="S55085"/>
</dbReference>
<dbReference type="RefSeq" id="NP_013817.1">
    <property type="nucleotide sequence ID" value="NM_001182599.1"/>
</dbReference>
<dbReference type="PDB" id="2CIQ">
    <property type="method" value="X-ray"/>
    <property type="resolution" value="1.70 A"/>
    <property type="chains" value="A=1-297"/>
</dbReference>
<dbReference type="PDB" id="2CIR">
    <property type="method" value="X-ray"/>
    <property type="resolution" value="1.60 A"/>
    <property type="chains" value="A=1-297"/>
</dbReference>
<dbReference type="PDB" id="2CIS">
    <property type="method" value="X-ray"/>
    <property type="resolution" value="1.62 A"/>
    <property type="chains" value="A=1-297"/>
</dbReference>
<dbReference type="PDBsum" id="2CIQ"/>
<dbReference type="PDBsum" id="2CIR"/>
<dbReference type="PDBsum" id="2CIS"/>
<dbReference type="SMR" id="Q03161"/>
<dbReference type="BioGRID" id="35275">
    <property type="interactions" value="99"/>
</dbReference>
<dbReference type="FunCoup" id="Q03161">
    <property type="interactions" value="372"/>
</dbReference>
<dbReference type="IntAct" id="Q03161">
    <property type="interactions" value="14"/>
</dbReference>
<dbReference type="MINT" id="Q03161"/>
<dbReference type="STRING" id="4932.YMR099C"/>
<dbReference type="iPTMnet" id="Q03161"/>
<dbReference type="PaxDb" id="4932-YMR099C"/>
<dbReference type="PeptideAtlas" id="Q03161"/>
<dbReference type="EnsemblFungi" id="YMR099C_mRNA">
    <property type="protein sequence ID" value="YMR099C"/>
    <property type="gene ID" value="YMR099C"/>
</dbReference>
<dbReference type="GeneID" id="855125"/>
<dbReference type="KEGG" id="sce:YMR099C"/>
<dbReference type="AGR" id="SGD:S000004705"/>
<dbReference type="SGD" id="S000004705">
    <property type="gene designation" value="YMR099C"/>
</dbReference>
<dbReference type="VEuPathDB" id="FungiDB:YMR099C"/>
<dbReference type="eggNOG" id="KOG1594">
    <property type="taxonomic scope" value="Eukaryota"/>
</dbReference>
<dbReference type="GeneTree" id="ENSGT00390000015166"/>
<dbReference type="HOGENOM" id="CLU_048345_2_0_1"/>
<dbReference type="InParanoid" id="Q03161"/>
<dbReference type="OMA" id="TQALHSY"/>
<dbReference type="OrthoDB" id="1659429at2759"/>
<dbReference type="BioCyc" id="MetaCyc:G3O-32799-MONOMER"/>
<dbReference type="BioCyc" id="YEAST:G3O-32799-MONOMER"/>
<dbReference type="BRENDA" id="5.3.3.3">
    <property type="organism ID" value="1455"/>
</dbReference>
<dbReference type="BioGRID-ORCS" id="855125">
    <property type="hits" value="2 hits in 10 CRISPR screens"/>
</dbReference>
<dbReference type="EvolutionaryTrace" id="Q03161"/>
<dbReference type="PRO" id="PR:Q03161"/>
<dbReference type="Proteomes" id="UP000002311">
    <property type="component" value="Chromosome XIII"/>
</dbReference>
<dbReference type="RNAct" id="Q03161">
    <property type="molecule type" value="protein"/>
</dbReference>
<dbReference type="GO" id="GO:0005737">
    <property type="term" value="C:cytoplasm"/>
    <property type="evidence" value="ECO:0007005"/>
    <property type="project" value="SGD"/>
</dbReference>
<dbReference type="GO" id="GO:0005634">
    <property type="term" value="C:nucleus"/>
    <property type="evidence" value="ECO:0007005"/>
    <property type="project" value="SGD"/>
</dbReference>
<dbReference type="GO" id="GO:0030246">
    <property type="term" value="F:carbohydrate binding"/>
    <property type="evidence" value="ECO:0007669"/>
    <property type="project" value="InterPro"/>
</dbReference>
<dbReference type="GO" id="GO:0047938">
    <property type="term" value="F:glucose-6-phosphate 1-epimerase activity"/>
    <property type="evidence" value="ECO:0000314"/>
    <property type="project" value="SGD"/>
</dbReference>
<dbReference type="GO" id="GO:0005975">
    <property type="term" value="P:carbohydrate metabolic process"/>
    <property type="evidence" value="ECO:0000305"/>
    <property type="project" value="SGD"/>
</dbReference>
<dbReference type="CDD" id="cd09020">
    <property type="entry name" value="D-hex-6-P-epi_like"/>
    <property type="match status" value="1"/>
</dbReference>
<dbReference type="FunFam" id="2.70.98.10:FF:000023">
    <property type="entry name" value="Glucose-6-phosphate 1-epimerase"/>
    <property type="match status" value="1"/>
</dbReference>
<dbReference type="Gene3D" id="2.70.98.10">
    <property type="match status" value="1"/>
</dbReference>
<dbReference type="InterPro" id="IPR008183">
    <property type="entry name" value="Aldose_1/G6P_1-epimerase"/>
</dbReference>
<dbReference type="InterPro" id="IPR025532">
    <property type="entry name" value="G6P_1-epimerase"/>
</dbReference>
<dbReference type="InterPro" id="IPR011013">
    <property type="entry name" value="Gal_mutarotase_sf_dom"/>
</dbReference>
<dbReference type="InterPro" id="IPR014718">
    <property type="entry name" value="GH-type_carb-bd"/>
</dbReference>
<dbReference type="PANTHER" id="PTHR11122">
    <property type="entry name" value="APOSPORY-ASSOCIATED PROTEIN C-RELATED"/>
    <property type="match status" value="1"/>
</dbReference>
<dbReference type="PANTHER" id="PTHR11122:SF13">
    <property type="entry name" value="GLUCOSE-6-PHOSPHATE 1-EPIMERASE"/>
    <property type="match status" value="1"/>
</dbReference>
<dbReference type="Pfam" id="PF01263">
    <property type="entry name" value="Aldose_epim"/>
    <property type="match status" value="1"/>
</dbReference>
<dbReference type="PIRSF" id="PIRSF016020">
    <property type="entry name" value="PHexose_mutarotase"/>
    <property type="match status" value="1"/>
</dbReference>
<dbReference type="SUPFAM" id="SSF74650">
    <property type="entry name" value="Galactose mutarotase-like"/>
    <property type="match status" value="1"/>
</dbReference>
<proteinExistence type="evidence at protein level"/>
<reference key="1">
    <citation type="journal article" date="1997" name="Nature">
        <title>The nucleotide sequence of Saccharomyces cerevisiae chromosome XIII.</title>
        <authorList>
            <person name="Bowman S."/>
            <person name="Churcher C.M."/>
            <person name="Badcock K."/>
            <person name="Brown D."/>
            <person name="Chillingworth T."/>
            <person name="Connor R."/>
            <person name="Dedman K."/>
            <person name="Devlin K."/>
            <person name="Gentles S."/>
            <person name="Hamlin N."/>
            <person name="Hunt S."/>
            <person name="Jagels K."/>
            <person name="Lye G."/>
            <person name="Moule S."/>
            <person name="Odell C."/>
            <person name="Pearson D."/>
            <person name="Rajandream M.A."/>
            <person name="Rice P."/>
            <person name="Skelton J."/>
            <person name="Walsh S.V."/>
            <person name="Whitehead S."/>
            <person name="Barrell B.G."/>
        </authorList>
    </citation>
    <scope>NUCLEOTIDE SEQUENCE [LARGE SCALE GENOMIC DNA]</scope>
    <source>
        <strain>ATCC 204508 / S288c</strain>
    </source>
</reference>
<reference key="2">
    <citation type="journal article" date="2014" name="G3 (Bethesda)">
        <title>The reference genome sequence of Saccharomyces cerevisiae: Then and now.</title>
        <authorList>
            <person name="Engel S.R."/>
            <person name="Dietrich F.S."/>
            <person name="Fisk D.G."/>
            <person name="Binkley G."/>
            <person name="Balakrishnan R."/>
            <person name="Costanzo M.C."/>
            <person name="Dwight S.S."/>
            <person name="Hitz B.C."/>
            <person name="Karra K."/>
            <person name="Nash R.S."/>
            <person name="Weng S."/>
            <person name="Wong E.D."/>
            <person name="Lloyd P."/>
            <person name="Skrzypek M.S."/>
            <person name="Miyasato S.R."/>
            <person name="Simison M."/>
            <person name="Cherry J.M."/>
        </authorList>
    </citation>
    <scope>GENOME REANNOTATION</scope>
    <source>
        <strain>ATCC 204508 / S288c</strain>
    </source>
</reference>
<reference key="3">
    <citation type="journal article" date="2003" name="Mol. Cell">
        <title>Assigning function to yeast proteins by integration of technologies.</title>
        <authorList>
            <person name="Hazbun T.R."/>
            <person name="Malmstroem L."/>
            <person name="Anderson S."/>
            <person name="Graczyk B.J."/>
            <person name="Fox B."/>
            <person name="Riffle M."/>
            <person name="Sundin B.A."/>
            <person name="Aranda J.D."/>
            <person name="McDonald W.H."/>
            <person name="Chiu C.-H."/>
            <person name="Snydsman B.E."/>
            <person name="Bradley P."/>
            <person name="Muller E.G.D."/>
            <person name="Fields S."/>
            <person name="Baker D."/>
            <person name="Yates J.R. III"/>
            <person name="Davis T.N."/>
        </authorList>
    </citation>
    <scope>IDENTIFICATION BY MASS SPECTROMETRY</scope>
</reference>
<reference key="4">
    <citation type="journal article" date="2003" name="Nature">
        <title>Global analysis of protein expression in yeast.</title>
        <authorList>
            <person name="Ghaemmaghami S."/>
            <person name="Huh W.-K."/>
            <person name="Bower K."/>
            <person name="Howson R.W."/>
            <person name="Belle A."/>
            <person name="Dephoure N."/>
            <person name="O'Shea E.K."/>
            <person name="Weissman J.S."/>
        </authorList>
    </citation>
    <scope>LEVEL OF PROTEIN EXPRESSION [LARGE SCALE ANALYSIS]</scope>
</reference>
<reference key="5">
    <citation type="journal article" date="2008" name="Mol. Cell. Proteomics">
        <title>A multidimensional chromatography technology for in-depth phosphoproteome analysis.</title>
        <authorList>
            <person name="Albuquerque C.P."/>
            <person name="Smolka M.B."/>
            <person name="Payne S.H."/>
            <person name="Bafna V."/>
            <person name="Eng J."/>
            <person name="Zhou H."/>
        </authorList>
    </citation>
    <scope>IDENTIFICATION BY MASS SPECTROMETRY [LARGE SCALE ANALYSIS]</scope>
</reference>
<reference key="6">
    <citation type="journal article" date="2009" name="Science">
        <title>Global analysis of Cdk1 substrate phosphorylation sites provides insights into evolution.</title>
        <authorList>
            <person name="Holt L.J."/>
            <person name="Tuch B.B."/>
            <person name="Villen J."/>
            <person name="Johnson A.D."/>
            <person name="Gygi S.P."/>
            <person name="Morgan D.O."/>
        </authorList>
    </citation>
    <scope>PHOSPHORYLATION [LARGE SCALE ANALYSIS] AT SER-88</scope>
    <scope>IDENTIFICATION BY MASS SPECTROMETRY [LARGE SCALE ANALYSIS]</scope>
</reference>
<reference key="7">
    <citation type="journal article" date="2006" name="J. Biol. Chem.">
        <title>Structure-based functional annotation: yeast ymr099c codes for a D-hexose-6-phosphate mutarotase.</title>
        <authorList>
            <person name="Graille M."/>
            <person name="Baltaze J.P."/>
            <person name="Leulliot N."/>
            <person name="Liger D."/>
            <person name="Quevillon-Cheruel S."/>
            <person name="van Tilbeurgh H."/>
        </authorList>
    </citation>
    <scope>X-RAY CRYSTALLOGRAPHY (1.6 ANGSTROMS) ALONE AND IN COMPLEX WITH GLC6P AND GAL6P</scope>
    <scope>FUNCTION</scope>
    <scope>CATALYTIC ACTIVITY</scope>
    <scope>ACTIVE SITE</scope>
</reference>
<comment type="function">
    <text evidence="2">Catalyzes the interconversion between the alpha and beta anomers from at least three hexose 6-phosphate sugars (Glc6P, Gal6P, and Man6P).</text>
</comment>
<comment type="catalytic activity">
    <reaction evidence="2">
        <text>alpha-D-glucose 6-phosphate = beta-D-glucose 6-phosphate</text>
        <dbReference type="Rhea" id="RHEA:16249"/>
        <dbReference type="ChEBI" id="CHEBI:58225"/>
        <dbReference type="ChEBI" id="CHEBI:58247"/>
        <dbReference type="EC" id="5.1.3.15"/>
    </reaction>
</comment>
<comment type="miscellaneous">
    <text evidence="1">Present with 8580 molecules/cell in log phase SD medium.</text>
</comment>
<comment type="similarity">
    <text evidence="4">Belongs to the glucose-6-phosphate 1-epimerase family.</text>
</comment>
<gene>
    <name type="ordered locus">YMR099C</name>
    <name type="ORF">YM6543.06C</name>
</gene>
<name>YMY9_YEAST</name>
<organism>
    <name type="scientific">Saccharomyces cerevisiae (strain ATCC 204508 / S288c)</name>
    <name type="common">Baker's yeast</name>
    <dbReference type="NCBI Taxonomy" id="559292"/>
    <lineage>
        <taxon>Eukaryota</taxon>
        <taxon>Fungi</taxon>
        <taxon>Dikarya</taxon>
        <taxon>Ascomycota</taxon>
        <taxon>Saccharomycotina</taxon>
        <taxon>Saccharomycetes</taxon>
        <taxon>Saccharomycetales</taxon>
        <taxon>Saccharomycetaceae</taxon>
        <taxon>Saccharomyces</taxon>
    </lineage>
</organism>